<organism>
    <name type="scientific">Xanthomonas campestris pv. campestris (strain B100)</name>
    <dbReference type="NCBI Taxonomy" id="509169"/>
    <lineage>
        <taxon>Bacteria</taxon>
        <taxon>Pseudomonadati</taxon>
        <taxon>Pseudomonadota</taxon>
        <taxon>Gammaproteobacteria</taxon>
        <taxon>Lysobacterales</taxon>
        <taxon>Lysobacteraceae</taxon>
        <taxon>Xanthomonas</taxon>
    </lineage>
</organism>
<sequence length="156" mass="17308">MKCRLIATGERAPAWVAQGFAEYQKRLSHWMPLELVEIEPGLRGKGRDAQRAIDDEGRRVLAALPKNAHVVALDVPGRPLSSEQLAQRMEHWRGQGRDLAFLIGGPEGHAADVVKSANESWSIGPLTLPHMLVRLIVAEQLYRAAAMLANHPYHRA</sequence>
<feature type="chain" id="PRO_0000366676" description="Ribosomal RNA large subunit methyltransferase H">
    <location>
        <begin position="1"/>
        <end position="156"/>
    </location>
</feature>
<feature type="binding site" evidence="1">
    <location>
        <position position="73"/>
    </location>
    <ligand>
        <name>S-adenosyl-L-methionine</name>
        <dbReference type="ChEBI" id="CHEBI:59789"/>
    </ligand>
</feature>
<feature type="binding site" evidence="1">
    <location>
        <position position="104"/>
    </location>
    <ligand>
        <name>S-adenosyl-L-methionine</name>
        <dbReference type="ChEBI" id="CHEBI:59789"/>
    </ligand>
</feature>
<feature type="binding site" evidence="1">
    <location>
        <begin position="123"/>
        <end position="128"/>
    </location>
    <ligand>
        <name>S-adenosyl-L-methionine</name>
        <dbReference type="ChEBI" id="CHEBI:59789"/>
    </ligand>
</feature>
<evidence type="ECO:0000255" key="1">
    <source>
        <dbReference type="HAMAP-Rule" id="MF_00658"/>
    </source>
</evidence>
<dbReference type="EC" id="2.1.1.177" evidence="1"/>
<dbReference type="EMBL" id="AM920689">
    <property type="protein sequence ID" value="CAP50897.1"/>
    <property type="molecule type" value="Genomic_DNA"/>
</dbReference>
<dbReference type="SMR" id="B0RR12"/>
<dbReference type="KEGG" id="xca:xcc-b100_1547"/>
<dbReference type="HOGENOM" id="CLU_100552_1_0_6"/>
<dbReference type="Proteomes" id="UP000001188">
    <property type="component" value="Chromosome"/>
</dbReference>
<dbReference type="GO" id="GO:0005737">
    <property type="term" value="C:cytoplasm"/>
    <property type="evidence" value="ECO:0007669"/>
    <property type="project" value="UniProtKB-SubCell"/>
</dbReference>
<dbReference type="GO" id="GO:0070038">
    <property type="term" value="F:rRNA (pseudouridine-N3-)-methyltransferase activity"/>
    <property type="evidence" value="ECO:0007669"/>
    <property type="project" value="UniProtKB-UniRule"/>
</dbReference>
<dbReference type="CDD" id="cd18081">
    <property type="entry name" value="RlmH-like"/>
    <property type="match status" value="1"/>
</dbReference>
<dbReference type="Gene3D" id="3.40.1280.10">
    <property type="match status" value="1"/>
</dbReference>
<dbReference type="HAMAP" id="MF_00658">
    <property type="entry name" value="23SrRNA_methyltr_H"/>
    <property type="match status" value="1"/>
</dbReference>
<dbReference type="InterPro" id="IPR029028">
    <property type="entry name" value="Alpha/beta_knot_MTases"/>
</dbReference>
<dbReference type="InterPro" id="IPR003742">
    <property type="entry name" value="RlmH-like"/>
</dbReference>
<dbReference type="InterPro" id="IPR029026">
    <property type="entry name" value="tRNA_m1G_MTases_N"/>
</dbReference>
<dbReference type="NCBIfam" id="NF000986">
    <property type="entry name" value="PRK00103.1-4"/>
    <property type="match status" value="1"/>
</dbReference>
<dbReference type="NCBIfam" id="TIGR00246">
    <property type="entry name" value="tRNA_RlmH_YbeA"/>
    <property type="match status" value="1"/>
</dbReference>
<dbReference type="PANTHER" id="PTHR33603">
    <property type="entry name" value="METHYLTRANSFERASE"/>
    <property type="match status" value="1"/>
</dbReference>
<dbReference type="PANTHER" id="PTHR33603:SF1">
    <property type="entry name" value="RIBOSOMAL RNA LARGE SUBUNIT METHYLTRANSFERASE H"/>
    <property type="match status" value="1"/>
</dbReference>
<dbReference type="Pfam" id="PF02590">
    <property type="entry name" value="SPOUT_MTase"/>
    <property type="match status" value="1"/>
</dbReference>
<dbReference type="PIRSF" id="PIRSF004505">
    <property type="entry name" value="MT_bac"/>
    <property type="match status" value="1"/>
</dbReference>
<dbReference type="SUPFAM" id="SSF75217">
    <property type="entry name" value="alpha/beta knot"/>
    <property type="match status" value="1"/>
</dbReference>
<gene>
    <name evidence="1" type="primary">rlmH</name>
    <name type="ordered locus">xcc-b100_1547</name>
</gene>
<name>RLMH_XANCB</name>
<comment type="function">
    <text evidence="1">Specifically methylates the pseudouridine at position 1915 (m3Psi1915) in 23S rRNA.</text>
</comment>
<comment type="catalytic activity">
    <reaction evidence="1">
        <text>pseudouridine(1915) in 23S rRNA + S-adenosyl-L-methionine = N(3)-methylpseudouridine(1915) in 23S rRNA + S-adenosyl-L-homocysteine + H(+)</text>
        <dbReference type="Rhea" id="RHEA:42752"/>
        <dbReference type="Rhea" id="RHEA-COMP:10221"/>
        <dbReference type="Rhea" id="RHEA-COMP:10222"/>
        <dbReference type="ChEBI" id="CHEBI:15378"/>
        <dbReference type="ChEBI" id="CHEBI:57856"/>
        <dbReference type="ChEBI" id="CHEBI:59789"/>
        <dbReference type="ChEBI" id="CHEBI:65314"/>
        <dbReference type="ChEBI" id="CHEBI:74486"/>
        <dbReference type="EC" id="2.1.1.177"/>
    </reaction>
</comment>
<comment type="subunit">
    <text evidence="1">Homodimer.</text>
</comment>
<comment type="subcellular location">
    <subcellularLocation>
        <location evidence="1">Cytoplasm</location>
    </subcellularLocation>
</comment>
<comment type="similarity">
    <text evidence="1">Belongs to the RNA methyltransferase RlmH family.</text>
</comment>
<keyword id="KW-0963">Cytoplasm</keyword>
<keyword id="KW-0489">Methyltransferase</keyword>
<keyword id="KW-0698">rRNA processing</keyword>
<keyword id="KW-0949">S-adenosyl-L-methionine</keyword>
<keyword id="KW-0808">Transferase</keyword>
<proteinExistence type="inferred from homology"/>
<protein>
    <recommendedName>
        <fullName evidence="1">Ribosomal RNA large subunit methyltransferase H</fullName>
        <ecNumber evidence="1">2.1.1.177</ecNumber>
    </recommendedName>
    <alternativeName>
        <fullName evidence="1">23S rRNA (pseudouridine1915-N3)-methyltransferase</fullName>
    </alternativeName>
    <alternativeName>
        <fullName evidence="1">23S rRNA m3Psi1915 methyltransferase</fullName>
    </alternativeName>
    <alternativeName>
        <fullName evidence="1">rRNA (pseudouridine-N3-)-methyltransferase RlmH</fullName>
    </alternativeName>
</protein>
<reference key="1">
    <citation type="journal article" date="2008" name="J. Biotechnol.">
        <title>The genome of Xanthomonas campestris pv. campestris B100 and its use for the reconstruction of metabolic pathways involved in xanthan biosynthesis.</title>
        <authorList>
            <person name="Vorhoelter F.-J."/>
            <person name="Schneiker S."/>
            <person name="Goesmann A."/>
            <person name="Krause L."/>
            <person name="Bekel T."/>
            <person name="Kaiser O."/>
            <person name="Linke B."/>
            <person name="Patschkowski T."/>
            <person name="Rueckert C."/>
            <person name="Schmid J."/>
            <person name="Sidhu V.K."/>
            <person name="Sieber V."/>
            <person name="Tauch A."/>
            <person name="Watt S.A."/>
            <person name="Weisshaar B."/>
            <person name="Becker A."/>
            <person name="Niehaus K."/>
            <person name="Puehler A."/>
        </authorList>
    </citation>
    <scope>NUCLEOTIDE SEQUENCE [LARGE SCALE GENOMIC DNA]</scope>
    <source>
        <strain>B100</strain>
    </source>
</reference>
<accession>B0RR12</accession>